<gene>
    <name evidence="1" type="primary">fusA</name>
    <name type="ordered locus">Pars_2139</name>
</gene>
<sequence length="740" mass="83005">MSSAVRIVEKQLDEILAIARNPAQIRNAGTLAHVDHGKTTTTDSLLMGAGLLSPKVAGKALAMDFVAIEQLRQMTVKAANISLYFEYGGKPYLVNFVDTPGHVDFTGHVTRSLRVMDGGLVVVDSVEGVMTQTETVVRQALEEYVRPVLFINKIDRLIKELRLSPQEIQQRILTIVKDFNALIDMFAPPEFKDKWKVDPAKGQVALGSALHKWGITIPMAQKAGLKFSNIVDAYEKGYVDKLGEEFPLYKTLLTMIIEHVPPPNVAQKYRIPRLWRGDLNSEVGKAMLEADPNGPTVIAVSKVNKDPHAGLIATGRVFSGTIREGDEVYIIGRKMKKKVLQTYIYMGPTRIIVPYMPAGNIVALMGVDEARAGDTLVDPRLTEVPPFEKMRYIAEPVVTVAIEPKNPAELAKLVEALKDLVIEDPTLDLKIDQETGQILLSGVGTLHLEIATWLLKERAKTEFTVSPPLIRFRETVRERSQVWEGKSPNKHNKLYFYVEPLDETTVELIATKEITEEQDPRERAKILREKAGWDTDEARGIWAIDDRYFNVIVDKTTGIQYLREIRDYIVQGFRWAMEAGPLAQEPMRGVKVVLVDAVVHEDPAHRGPAQIMPATKNAIFAAVLSARPTLLEPLVRLDIKVAPDYIGSVTSVLNKHRGKILDMTQQEYMAYLRAELPVLESFTISDELRAAAAGKIFWSMQFARWAPYPESMLVDFVKQLRKKKGLKEDIPKPTDFVEVF</sequence>
<reference key="1">
    <citation type="submission" date="2007-04" db="EMBL/GenBank/DDBJ databases">
        <title>Complete sequence of Pyrobaculum arsenaticum DSM 13514.</title>
        <authorList>
            <consortium name="US DOE Joint Genome Institute"/>
            <person name="Copeland A."/>
            <person name="Lucas S."/>
            <person name="Lapidus A."/>
            <person name="Barry K."/>
            <person name="Glavina del Rio T."/>
            <person name="Dalin E."/>
            <person name="Tice H."/>
            <person name="Pitluck S."/>
            <person name="Chain P."/>
            <person name="Malfatti S."/>
            <person name="Shin M."/>
            <person name="Vergez L."/>
            <person name="Schmutz J."/>
            <person name="Larimer F."/>
            <person name="Land M."/>
            <person name="Hauser L."/>
            <person name="Kyrpides N."/>
            <person name="Mikhailova N."/>
            <person name="Cozen A.E."/>
            <person name="Fitz-Gibbon S.T."/>
            <person name="House C.H."/>
            <person name="Saltikov C."/>
            <person name="Lowe T.M."/>
            <person name="Richardson P."/>
        </authorList>
    </citation>
    <scope>NUCLEOTIDE SEQUENCE [LARGE SCALE GENOMIC DNA]</scope>
    <source>
        <strain>ATCC 700994 / DSM 13514 / JCM 11321 / PZ6</strain>
    </source>
</reference>
<name>EF2_PYRAR</name>
<organism>
    <name type="scientific">Pyrobaculum arsenaticum (strain DSM 13514 / JCM 11321 / PZ6)</name>
    <dbReference type="NCBI Taxonomy" id="340102"/>
    <lineage>
        <taxon>Archaea</taxon>
        <taxon>Thermoproteota</taxon>
        <taxon>Thermoprotei</taxon>
        <taxon>Thermoproteales</taxon>
        <taxon>Thermoproteaceae</taxon>
        <taxon>Pyrobaculum</taxon>
    </lineage>
</organism>
<feature type="chain" id="PRO_0000335859" description="Elongation factor 2">
    <location>
        <begin position="1"/>
        <end position="740"/>
    </location>
</feature>
<feature type="domain" description="tr-type G">
    <location>
        <begin position="23"/>
        <end position="264"/>
    </location>
</feature>
<feature type="binding site" evidence="1">
    <location>
        <begin position="32"/>
        <end position="39"/>
    </location>
    <ligand>
        <name>GTP</name>
        <dbReference type="ChEBI" id="CHEBI:37565"/>
    </ligand>
</feature>
<feature type="binding site" evidence="1">
    <location>
        <begin position="98"/>
        <end position="102"/>
    </location>
    <ligand>
        <name>GTP</name>
        <dbReference type="ChEBI" id="CHEBI:37565"/>
    </ligand>
</feature>
<feature type="binding site" evidence="1">
    <location>
        <begin position="152"/>
        <end position="155"/>
    </location>
    <ligand>
        <name>GTP</name>
        <dbReference type="ChEBI" id="CHEBI:37565"/>
    </ligand>
</feature>
<feature type="modified residue" description="Diphthamide" evidence="1">
    <location>
        <position position="605"/>
    </location>
</feature>
<comment type="function">
    <text evidence="1">Catalyzes the GTP-dependent ribosomal translocation step during translation elongation. During this step, the ribosome changes from the pre-translocational (PRE) to the post-translocational (POST) state as the newly formed A-site-bound peptidyl-tRNA and P-site-bound deacylated tRNA move to the P and E sites, respectively. Catalyzes the coordinated movement of the two tRNA molecules, the mRNA and conformational changes in the ribosome.</text>
</comment>
<comment type="subcellular location">
    <subcellularLocation>
        <location evidence="1">Cytoplasm</location>
    </subcellularLocation>
</comment>
<comment type="similarity">
    <text evidence="1">Belongs to the TRAFAC class translation factor GTPase superfamily. Classic translation factor GTPase family. EF-G/EF-2 subfamily.</text>
</comment>
<evidence type="ECO:0000255" key="1">
    <source>
        <dbReference type="HAMAP-Rule" id="MF_00054"/>
    </source>
</evidence>
<accession>A4WMR8</accession>
<protein>
    <recommendedName>
        <fullName evidence="1">Elongation factor 2</fullName>
        <shortName evidence="1">EF-2</shortName>
    </recommendedName>
</protein>
<keyword id="KW-0963">Cytoplasm</keyword>
<keyword id="KW-0251">Elongation factor</keyword>
<keyword id="KW-0342">GTP-binding</keyword>
<keyword id="KW-0547">Nucleotide-binding</keyword>
<keyword id="KW-0648">Protein biosynthesis</keyword>
<dbReference type="EMBL" id="CP000660">
    <property type="protein sequence ID" value="ABP51685.1"/>
    <property type="molecule type" value="Genomic_DNA"/>
</dbReference>
<dbReference type="SMR" id="A4WMR8"/>
<dbReference type="STRING" id="340102.Pars_2139"/>
<dbReference type="KEGG" id="pas:Pars_2139"/>
<dbReference type="HOGENOM" id="CLU_002794_11_1_2"/>
<dbReference type="OrthoDB" id="6290at2157"/>
<dbReference type="PhylomeDB" id="A4WMR8"/>
<dbReference type="Proteomes" id="UP000001567">
    <property type="component" value="Chromosome"/>
</dbReference>
<dbReference type="GO" id="GO:0005829">
    <property type="term" value="C:cytosol"/>
    <property type="evidence" value="ECO:0007669"/>
    <property type="project" value="TreeGrafter"/>
</dbReference>
<dbReference type="GO" id="GO:1990904">
    <property type="term" value="C:ribonucleoprotein complex"/>
    <property type="evidence" value="ECO:0007669"/>
    <property type="project" value="TreeGrafter"/>
</dbReference>
<dbReference type="GO" id="GO:0005525">
    <property type="term" value="F:GTP binding"/>
    <property type="evidence" value="ECO:0007669"/>
    <property type="project" value="UniProtKB-UniRule"/>
</dbReference>
<dbReference type="GO" id="GO:0003924">
    <property type="term" value="F:GTPase activity"/>
    <property type="evidence" value="ECO:0007669"/>
    <property type="project" value="InterPro"/>
</dbReference>
<dbReference type="GO" id="GO:0003746">
    <property type="term" value="F:translation elongation factor activity"/>
    <property type="evidence" value="ECO:0007669"/>
    <property type="project" value="UniProtKB-UniRule"/>
</dbReference>
<dbReference type="CDD" id="cd01681">
    <property type="entry name" value="aeEF2_snRNP_like_IV"/>
    <property type="match status" value="1"/>
</dbReference>
<dbReference type="CDD" id="cd01885">
    <property type="entry name" value="EF2"/>
    <property type="match status" value="1"/>
</dbReference>
<dbReference type="CDD" id="cd16268">
    <property type="entry name" value="EF2_II"/>
    <property type="match status" value="1"/>
</dbReference>
<dbReference type="CDD" id="cd16261">
    <property type="entry name" value="EF2_snRNP_III"/>
    <property type="match status" value="1"/>
</dbReference>
<dbReference type="CDD" id="cd01514">
    <property type="entry name" value="Elongation_Factor_C"/>
    <property type="match status" value="1"/>
</dbReference>
<dbReference type="FunFam" id="3.30.230.10:FF:000009">
    <property type="entry name" value="116 kDa U5 small nuclear ribonucleoprotein component"/>
    <property type="match status" value="1"/>
</dbReference>
<dbReference type="FunFam" id="3.30.70.240:FF:000010">
    <property type="entry name" value="Elongation factor 2"/>
    <property type="match status" value="1"/>
</dbReference>
<dbReference type="FunFam" id="3.30.70.870:FF:000002">
    <property type="entry name" value="Translation elongation factor 2"/>
    <property type="match status" value="1"/>
</dbReference>
<dbReference type="Gene3D" id="3.30.230.10">
    <property type="match status" value="1"/>
</dbReference>
<dbReference type="Gene3D" id="3.30.70.240">
    <property type="match status" value="1"/>
</dbReference>
<dbReference type="Gene3D" id="3.30.70.870">
    <property type="entry name" value="Elongation Factor G (Translational Gtpase), domain 3"/>
    <property type="match status" value="1"/>
</dbReference>
<dbReference type="Gene3D" id="3.40.50.300">
    <property type="entry name" value="P-loop containing nucleotide triphosphate hydrolases"/>
    <property type="match status" value="1"/>
</dbReference>
<dbReference type="Gene3D" id="2.40.30.10">
    <property type="entry name" value="Translation factors"/>
    <property type="match status" value="1"/>
</dbReference>
<dbReference type="HAMAP" id="MF_00054_A">
    <property type="entry name" value="EF_G_EF_2_A"/>
    <property type="match status" value="1"/>
</dbReference>
<dbReference type="InterPro" id="IPR041095">
    <property type="entry name" value="EFG_II"/>
</dbReference>
<dbReference type="InterPro" id="IPR035647">
    <property type="entry name" value="EFG_III/V"/>
</dbReference>
<dbReference type="InterPro" id="IPR000640">
    <property type="entry name" value="EFG_V-like"/>
</dbReference>
<dbReference type="InterPro" id="IPR004161">
    <property type="entry name" value="EFTu-like_2"/>
</dbReference>
<dbReference type="InterPro" id="IPR027417">
    <property type="entry name" value="P-loop_NTPase"/>
</dbReference>
<dbReference type="InterPro" id="IPR020568">
    <property type="entry name" value="Ribosomal_Su5_D2-typ_SF"/>
</dbReference>
<dbReference type="InterPro" id="IPR014721">
    <property type="entry name" value="Ribsml_uS5_D2-typ_fold_subgr"/>
</dbReference>
<dbReference type="InterPro" id="IPR005225">
    <property type="entry name" value="Small_GTP-bd"/>
</dbReference>
<dbReference type="InterPro" id="IPR000795">
    <property type="entry name" value="T_Tr_GTP-bd_dom"/>
</dbReference>
<dbReference type="InterPro" id="IPR009000">
    <property type="entry name" value="Transl_B-barrel_sf"/>
</dbReference>
<dbReference type="InterPro" id="IPR004543">
    <property type="entry name" value="Transl_elong_EFG/EF2_arc"/>
</dbReference>
<dbReference type="InterPro" id="IPR005517">
    <property type="entry name" value="Transl_elong_EFG/EF2_IV"/>
</dbReference>
<dbReference type="NCBIfam" id="TIGR00490">
    <property type="entry name" value="aEF-2"/>
    <property type="match status" value="1"/>
</dbReference>
<dbReference type="NCBIfam" id="TIGR00231">
    <property type="entry name" value="small_GTP"/>
    <property type="match status" value="1"/>
</dbReference>
<dbReference type="PANTHER" id="PTHR42908:SF3">
    <property type="entry name" value="ELONGATION FACTOR-LIKE GTPASE 1"/>
    <property type="match status" value="1"/>
</dbReference>
<dbReference type="PANTHER" id="PTHR42908">
    <property type="entry name" value="TRANSLATION ELONGATION FACTOR-RELATED"/>
    <property type="match status" value="1"/>
</dbReference>
<dbReference type="Pfam" id="PF00679">
    <property type="entry name" value="EFG_C"/>
    <property type="match status" value="1"/>
</dbReference>
<dbReference type="Pfam" id="PF14492">
    <property type="entry name" value="EFG_III"/>
    <property type="match status" value="1"/>
</dbReference>
<dbReference type="Pfam" id="PF03764">
    <property type="entry name" value="EFG_IV"/>
    <property type="match status" value="1"/>
</dbReference>
<dbReference type="Pfam" id="PF00009">
    <property type="entry name" value="GTP_EFTU"/>
    <property type="match status" value="1"/>
</dbReference>
<dbReference type="Pfam" id="PF03144">
    <property type="entry name" value="GTP_EFTU_D2"/>
    <property type="match status" value="1"/>
</dbReference>
<dbReference type="PRINTS" id="PR00315">
    <property type="entry name" value="ELONGATNFCT"/>
</dbReference>
<dbReference type="SMART" id="SM00838">
    <property type="entry name" value="EFG_C"/>
    <property type="match status" value="1"/>
</dbReference>
<dbReference type="SMART" id="SM00889">
    <property type="entry name" value="EFG_IV"/>
    <property type="match status" value="1"/>
</dbReference>
<dbReference type="SUPFAM" id="SSF54980">
    <property type="entry name" value="EF-G C-terminal domain-like"/>
    <property type="match status" value="2"/>
</dbReference>
<dbReference type="SUPFAM" id="SSF52540">
    <property type="entry name" value="P-loop containing nucleoside triphosphate hydrolases"/>
    <property type="match status" value="1"/>
</dbReference>
<dbReference type="SUPFAM" id="SSF54211">
    <property type="entry name" value="Ribosomal protein S5 domain 2-like"/>
    <property type="match status" value="1"/>
</dbReference>
<dbReference type="SUPFAM" id="SSF50447">
    <property type="entry name" value="Translation proteins"/>
    <property type="match status" value="1"/>
</dbReference>
<dbReference type="PROSITE" id="PS51722">
    <property type="entry name" value="G_TR_2"/>
    <property type="match status" value="1"/>
</dbReference>
<proteinExistence type="inferred from homology"/>